<evidence type="ECO:0000255" key="1">
    <source>
        <dbReference type="HAMAP-Rule" id="MF_00402"/>
    </source>
</evidence>
<evidence type="ECO:0000305" key="2"/>
<dbReference type="EMBL" id="CP000075">
    <property type="protein sequence ID" value="AAY36336.1"/>
    <property type="molecule type" value="Genomic_DNA"/>
</dbReference>
<dbReference type="RefSeq" id="WP_002552524.1">
    <property type="nucleotide sequence ID" value="NC_007005.1"/>
</dbReference>
<dbReference type="RefSeq" id="YP_234374.1">
    <property type="nucleotide sequence ID" value="NC_007005.1"/>
</dbReference>
<dbReference type="SMR" id="Q4ZWY6"/>
<dbReference type="STRING" id="205918.Psyr_1285"/>
<dbReference type="GeneID" id="96217689"/>
<dbReference type="KEGG" id="psb:Psyr_1285"/>
<dbReference type="PATRIC" id="fig|205918.7.peg.1317"/>
<dbReference type="eggNOG" id="COG0335">
    <property type="taxonomic scope" value="Bacteria"/>
</dbReference>
<dbReference type="HOGENOM" id="CLU_103507_1_0_6"/>
<dbReference type="OrthoDB" id="9803541at2"/>
<dbReference type="Proteomes" id="UP000000426">
    <property type="component" value="Chromosome"/>
</dbReference>
<dbReference type="GO" id="GO:0022625">
    <property type="term" value="C:cytosolic large ribosomal subunit"/>
    <property type="evidence" value="ECO:0007669"/>
    <property type="project" value="TreeGrafter"/>
</dbReference>
<dbReference type="GO" id="GO:0003735">
    <property type="term" value="F:structural constituent of ribosome"/>
    <property type="evidence" value="ECO:0007669"/>
    <property type="project" value="InterPro"/>
</dbReference>
<dbReference type="GO" id="GO:0006412">
    <property type="term" value="P:translation"/>
    <property type="evidence" value="ECO:0007669"/>
    <property type="project" value="UniProtKB-UniRule"/>
</dbReference>
<dbReference type="FunFam" id="2.30.30.790:FF:000001">
    <property type="entry name" value="50S ribosomal protein L19"/>
    <property type="match status" value="1"/>
</dbReference>
<dbReference type="Gene3D" id="2.30.30.790">
    <property type="match status" value="1"/>
</dbReference>
<dbReference type="HAMAP" id="MF_00402">
    <property type="entry name" value="Ribosomal_bL19"/>
    <property type="match status" value="1"/>
</dbReference>
<dbReference type="InterPro" id="IPR001857">
    <property type="entry name" value="Ribosomal_bL19"/>
</dbReference>
<dbReference type="InterPro" id="IPR018257">
    <property type="entry name" value="Ribosomal_bL19_CS"/>
</dbReference>
<dbReference type="InterPro" id="IPR038657">
    <property type="entry name" value="Ribosomal_bL19_sf"/>
</dbReference>
<dbReference type="InterPro" id="IPR008991">
    <property type="entry name" value="Translation_prot_SH3-like_sf"/>
</dbReference>
<dbReference type="NCBIfam" id="TIGR01024">
    <property type="entry name" value="rplS_bact"/>
    <property type="match status" value="1"/>
</dbReference>
<dbReference type="PANTHER" id="PTHR15680:SF9">
    <property type="entry name" value="LARGE RIBOSOMAL SUBUNIT PROTEIN BL19M"/>
    <property type="match status" value="1"/>
</dbReference>
<dbReference type="PANTHER" id="PTHR15680">
    <property type="entry name" value="RIBOSOMAL PROTEIN L19"/>
    <property type="match status" value="1"/>
</dbReference>
<dbReference type="Pfam" id="PF01245">
    <property type="entry name" value="Ribosomal_L19"/>
    <property type="match status" value="1"/>
</dbReference>
<dbReference type="PIRSF" id="PIRSF002191">
    <property type="entry name" value="Ribosomal_L19"/>
    <property type="match status" value="1"/>
</dbReference>
<dbReference type="PRINTS" id="PR00061">
    <property type="entry name" value="RIBOSOMALL19"/>
</dbReference>
<dbReference type="SUPFAM" id="SSF50104">
    <property type="entry name" value="Translation proteins SH3-like domain"/>
    <property type="match status" value="1"/>
</dbReference>
<dbReference type="PROSITE" id="PS01015">
    <property type="entry name" value="RIBOSOMAL_L19"/>
    <property type="match status" value="1"/>
</dbReference>
<keyword id="KW-0687">Ribonucleoprotein</keyword>
<keyword id="KW-0689">Ribosomal protein</keyword>
<gene>
    <name evidence="1" type="primary">rplS</name>
    <name type="ordered locus">Psyr_1285</name>
</gene>
<accession>Q4ZWY6</accession>
<reference key="1">
    <citation type="journal article" date="2005" name="Proc. Natl. Acad. Sci. U.S.A.">
        <title>Comparison of the complete genome sequences of Pseudomonas syringae pv. syringae B728a and pv. tomato DC3000.</title>
        <authorList>
            <person name="Feil H."/>
            <person name="Feil W.S."/>
            <person name="Chain P."/>
            <person name="Larimer F."/>
            <person name="Dibartolo G."/>
            <person name="Copeland A."/>
            <person name="Lykidis A."/>
            <person name="Trong S."/>
            <person name="Nolan M."/>
            <person name="Goltsman E."/>
            <person name="Thiel J."/>
            <person name="Malfatti S."/>
            <person name="Loper J.E."/>
            <person name="Lapidus A."/>
            <person name="Detter J.C."/>
            <person name="Land M."/>
            <person name="Richardson P.M."/>
            <person name="Kyrpides N.C."/>
            <person name="Ivanova N."/>
            <person name="Lindow S.E."/>
        </authorList>
    </citation>
    <scope>NUCLEOTIDE SEQUENCE [LARGE SCALE GENOMIC DNA]</scope>
    <source>
        <strain>B728a</strain>
    </source>
</reference>
<feature type="chain" id="PRO_0000226865" description="Large ribosomal subunit protein bL19">
    <location>
        <begin position="1"/>
        <end position="116"/>
    </location>
</feature>
<proteinExistence type="inferred from homology"/>
<comment type="function">
    <text evidence="1">This protein is located at the 30S-50S ribosomal subunit interface and may play a role in the structure and function of the aminoacyl-tRNA binding site.</text>
</comment>
<comment type="similarity">
    <text evidence="1">Belongs to the bacterial ribosomal protein bL19 family.</text>
</comment>
<organism>
    <name type="scientific">Pseudomonas syringae pv. syringae (strain B728a)</name>
    <dbReference type="NCBI Taxonomy" id="205918"/>
    <lineage>
        <taxon>Bacteria</taxon>
        <taxon>Pseudomonadati</taxon>
        <taxon>Pseudomonadota</taxon>
        <taxon>Gammaproteobacteria</taxon>
        <taxon>Pseudomonadales</taxon>
        <taxon>Pseudomonadaceae</taxon>
        <taxon>Pseudomonas</taxon>
        <taxon>Pseudomonas syringae</taxon>
    </lineage>
</organism>
<sequence>MTNKIILALEAEQMTKEIPTFAPGDTIVVQVKVKEGDRARLQAFEGVVIAKRNRGVNSAFTVRKISNGVGVERTFQTYSPQIDSMAVKRRGDVRKAKLYYLRDLSGKAARIKEKLS</sequence>
<protein>
    <recommendedName>
        <fullName evidence="1">Large ribosomal subunit protein bL19</fullName>
    </recommendedName>
    <alternativeName>
        <fullName evidence="2">50S ribosomal protein L19</fullName>
    </alternativeName>
</protein>
<name>RL19_PSEU2</name>